<keyword id="KW-0119">Carbohydrate metabolism</keyword>
<keyword id="KW-0963">Cytoplasm</keyword>
<keyword id="KW-0903">Direct protein sequencing</keyword>
<keyword id="KW-0321">Glycogen metabolism</keyword>
<keyword id="KW-0326">Glycosidase</keyword>
<keyword id="KW-0378">Hydrolase</keyword>
<feature type="chain" id="PRO_0000054300" description="Glycogen debranching enzyme">
    <location>
        <begin position="1"/>
        <end position="657"/>
    </location>
</feature>
<feature type="region of interest" description="Disordered" evidence="2">
    <location>
        <begin position="458"/>
        <end position="485"/>
    </location>
</feature>
<feature type="compositionally biased region" description="Polar residues" evidence="2">
    <location>
        <begin position="465"/>
        <end position="475"/>
    </location>
</feature>
<feature type="active site" description="Nucleophile" evidence="1">
    <location>
        <position position="334"/>
    </location>
</feature>
<feature type="active site" description="Proton donor" evidence="1">
    <location>
        <position position="369"/>
    </location>
</feature>
<feature type="site" description="Transition state stabilizer" evidence="1">
    <location>
        <position position="441"/>
    </location>
</feature>
<name>GLGX_DICCH</name>
<evidence type="ECO:0000255" key="1">
    <source>
        <dbReference type="HAMAP-Rule" id="MF_01248"/>
    </source>
</evidence>
<evidence type="ECO:0000256" key="2">
    <source>
        <dbReference type="SAM" id="MobiDB-lite"/>
    </source>
</evidence>
<evidence type="ECO:0000269" key="3">
    <source>
    </source>
</evidence>
<evidence type="ECO:0000305" key="4"/>
<evidence type="ECO:0000305" key="5">
    <source>
    </source>
</evidence>
<evidence type="ECO:0000305" key="6">
    <source>
    </source>
</evidence>
<proteinExistence type="evidence at protein level"/>
<accession>Q8KR69</accession>
<dbReference type="EC" id="3.2.1.196" evidence="1"/>
<dbReference type="EMBL" id="AY044255">
    <property type="protein sequence ID" value="AAL02393.1"/>
    <property type="molecule type" value="Genomic_DNA"/>
</dbReference>
<dbReference type="PIR" id="JC7767">
    <property type="entry name" value="JC7767"/>
</dbReference>
<dbReference type="SMR" id="Q8KR69"/>
<dbReference type="CAZy" id="CBM48">
    <property type="family name" value="Carbohydrate-Binding Module Family 48"/>
</dbReference>
<dbReference type="CAZy" id="GH13">
    <property type="family name" value="Glycoside Hydrolase Family 13"/>
</dbReference>
<dbReference type="UniPathway" id="UPA00165"/>
<dbReference type="GO" id="GO:0005737">
    <property type="term" value="C:cytoplasm"/>
    <property type="evidence" value="ECO:0007669"/>
    <property type="project" value="UniProtKB-SubCell"/>
</dbReference>
<dbReference type="GO" id="GO:0004133">
    <property type="term" value="F:glycogen debranching enzyme activity"/>
    <property type="evidence" value="ECO:0007669"/>
    <property type="project" value="UniProtKB-UniRule"/>
</dbReference>
<dbReference type="GO" id="GO:0004553">
    <property type="term" value="F:hydrolase activity, hydrolyzing O-glycosyl compounds"/>
    <property type="evidence" value="ECO:0007669"/>
    <property type="project" value="InterPro"/>
</dbReference>
<dbReference type="GO" id="GO:0005980">
    <property type="term" value="P:glycogen catabolic process"/>
    <property type="evidence" value="ECO:0007669"/>
    <property type="project" value="UniProtKB-UniRule"/>
</dbReference>
<dbReference type="CDD" id="cd11326">
    <property type="entry name" value="AmyAc_Glg_debranch"/>
    <property type="match status" value="1"/>
</dbReference>
<dbReference type="CDD" id="cd02856">
    <property type="entry name" value="E_set_GDE_Isoamylase_N"/>
    <property type="match status" value="1"/>
</dbReference>
<dbReference type="Gene3D" id="3.20.20.80">
    <property type="entry name" value="Glycosidases"/>
    <property type="match status" value="1"/>
</dbReference>
<dbReference type="Gene3D" id="2.60.40.1180">
    <property type="entry name" value="Golgi alpha-mannosidase II"/>
    <property type="match status" value="1"/>
</dbReference>
<dbReference type="Gene3D" id="2.60.40.10">
    <property type="entry name" value="Immunoglobulins"/>
    <property type="match status" value="1"/>
</dbReference>
<dbReference type="HAMAP" id="MF_01248">
    <property type="entry name" value="GlgX"/>
    <property type="match status" value="1"/>
</dbReference>
<dbReference type="InterPro" id="IPR040784">
    <property type="entry name" value="GlgX_C"/>
</dbReference>
<dbReference type="InterPro" id="IPR044505">
    <property type="entry name" value="GlgX_Isoamylase_N_E_set"/>
</dbReference>
<dbReference type="InterPro" id="IPR006047">
    <property type="entry name" value="Glyco_hydro_13_cat_dom"/>
</dbReference>
<dbReference type="InterPro" id="IPR004193">
    <property type="entry name" value="Glyco_hydro_13_N"/>
</dbReference>
<dbReference type="InterPro" id="IPR013780">
    <property type="entry name" value="Glyco_hydro_b"/>
</dbReference>
<dbReference type="InterPro" id="IPR022844">
    <property type="entry name" value="Glycogen_debranch_bac"/>
</dbReference>
<dbReference type="InterPro" id="IPR011837">
    <property type="entry name" value="Glycogen_debranch_GlgX"/>
</dbReference>
<dbReference type="InterPro" id="IPR017853">
    <property type="entry name" value="Glycoside_hydrolase_SF"/>
</dbReference>
<dbReference type="InterPro" id="IPR013783">
    <property type="entry name" value="Ig-like_fold"/>
</dbReference>
<dbReference type="InterPro" id="IPR014756">
    <property type="entry name" value="Ig_E-set"/>
</dbReference>
<dbReference type="NCBIfam" id="TIGR02100">
    <property type="entry name" value="glgX_debranch"/>
    <property type="match status" value="1"/>
</dbReference>
<dbReference type="NCBIfam" id="NF002983">
    <property type="entry name" value="PRK03705.1"/>
    <property type="match status" value="1"/>
</dbReference>
<dbReference type="PANTHER" id="PTHR43002">
    <property type="entry name" value="GLYCOGEN DEBRANCHING ENZYME"/>
    <property type="match status" value="1"/>
</dbReference>
<dbReference type="Pfam" id="PF00128">
    <property type="entry name" value="Alpha-amylase"/>
    <property type="match status" value="1"/>
</dbReference>
<dbReference type="Pfam" id="PF02922">
    <property type="entry name" value="CBM_48"/>
    <property type="match status" value="1"/>
</dbReference>
<dbReference type="Pfam" id="PF18390">
    <property type="entry name" value="GlgX_C"/>
    <property type="match status" value="1"/>
</dbReference>
<dbReference type="SMART" id="SM00642">
    <property type="entry name" value="Aamy"/>
    <property type="match status" value="1"/>
</dbReference>
<dbReference type="SUPFAM" id="SSF51445">
    <property type="entry name" value="(Trans)glycosidases"/>
    <property type="match status" value="1"/>
</dbReference>
<dbReference type="SUPFAM" id="SSF81296">
    <property type="entry name" value="E set domains"/>
    <property type="match status" value="1"/>
</dbReference>
<dbReference type="SUPFAM" id="SSF51011">
    <property type="entry name" value="Glycosyl hydrolase domain"/>
    <property type="match status" value="1"/>
</dbReference>
<reference key="1">
    <citation type="journal article" date="2001" name="Biochem. Biophys. Res. Commun.">
        <title>Cloning and characterization of an intracellular isoamylase gene from Pectobacterium chrysanthemi PY35.</title>
        <authorList>
            <person name="Lim W.-J."/>
            <person name="Park S.-R."/>
            <person name="Cho S.-J."/>
            <person name="Kim M.-K."/>
            <person name="Ryu S.-K."/>
            <person name="Hong S.-Y."/>
            <person name="Seo W.-T."/>
            <person name="Kim H."/>
            <person name="Yun H.-D."/>
        </authorList>
    </citation>
    <scope>NUCLEOTIDE SEQUENCE [GENOMIC DNA]</scope>
    <scope>PROTEIN SEQUENCE OF 1-5</scope>
    <scope>CHARACTERIZATION</scope>
    <source>
        <strain>PY35</strain>
    </source>
</reference>
<reference key="2">
    <citation type="journal article" date="2003" name="Biochem. Biophys. Res. Commun.">
        <title>Cloning and characterization of the glycogen branching enzyme gene existing in tandem with the glycogen debranching enzyme from Pectobacterium chrysanthemi PY35.</title>
        <authorList>
            <person name="Lim W.-J."/>
            <person name="Park S.-R."/>
            <person name="Kim M.-K."/>
            <person name="An C.-L."/>
            <person name="Yun H.-J."/>
            <person name="Hong S.-Y."/>
            <person name="Kim E.-J."/>
            <person name="Shin E.-C."/>
            <person name="Lee S.-W."/>
            <person name="Lim Y.-P."/>
            <person name="Yun H.-D."/>
        </authorList>
    </citation>
    <scope>GENE NAME GLGX</scope>
</reference>
<organism>
    <name type="scientific">Dickeya chrysanthemi</name>
    <name type="common">Pectobacterium chrysanthemi</name>
    <name type="synonym">Erwinia chrysanthemi</name>
    <dbReference type="NCBI Taxonomy" id="556"/>
    <lineage>
        <taxon>Bacteria</taxon>
        <taxon>Pseudomonadati</taxon>
        <taxon>Pseudomonadota</taxon>
        <taxon>Gammaproteobacteria</taxon>
        <taxon>Enterobacterales</taxon>
        <taxon>Pectobacteriaceae</taxon>
        <taxon>Dickeya</taxon>
    </lineage>
</organism>
<comment type="function">
    <text evidence="1 3">Removes maltotriose and maltotetraose chains that are attached by 1,6-alpha-linkage to the limit dextrin main chain, generating a debranched limit dextrin (By similarity). Hydrolyzes the alpha-1,6-glycosidic linkages in amylopectin while does not hydrolyze the alpha-1,4-glycosidic linkages in amylose. Native glycogen is a poor substrate (PubMed:11554733).</text>
</comment>
<comment type="catalytic activity">
    <reaction evidence="1">
        <text>Hydrolysis of (1-&gt;6)-alpha-D-glucosidic linkages to branches with degrees of polymerization of three or four glucose residues in limit dextrin.</text>
        <dbReference type="EC" id="3.2.1.196"/>
    </reaction>
</comment>
<comment type="activity regulation">
    <text>Slightly activated by Ca(2+). Inhibited by divalent cations such as Zn(2+), Cu(2+), Fe(2+), Mg(2+), Mn(2+), but only slightly inhibited by EDTA.</text>
</comment>
<comment type="biophysicochemical properties">
    <phDependence>
        <text>Optimum pH is 7.</text>
    </phDependence>
    <temperatureDependence>
        <text>Optimum temperature is 40 degrees Celsius.</text>
    </temperatureDependence>
</comment>
<comment type="pathway">
    <text evidence="1">Glycan degradation; glycogen degradation.</text>
</comment>
<comment type="subcellular location">
    <subcellularLocation>
        <location evidence="4">Cytoplasm</location>
    </subcellularLocation>
</comment>
<comment type="similarity">
    <text evidence="1 4">Belongs to the glycosyl hydrolase 13 family.</text>
</comment>
<comment type="caution">
    <text evidence="5 6">Was originally (PubMed:11554733) identified as an isoamylase despite of its little activity on glycogen, but was renamed as glycogen debranching enzyme due to the characterization of the flanking gene coding for the glycogen branching enzyme (PubMed:12480526).</text>
</comment>
<protein>
    <recommendedName>
        <fullName evidence="1">Glycogen debranching enzyme</fullName>
        <ecNumber evidence="1">3.2.1.196</ecNumber>
    </recommendedName>
    <alternativeName>
        <fullName evidence="1">Limit dextrin alpha-1,6-maltotetraose-hydrolase</fullName>
    </alternativeName>
</protein>
<gene>
    <name evidence="1" type="primary">glgX</name>
    <name type="synonym">amyX</name>
</gene>
<sequence>MGELLAGRPRPLGSHFDGEGVNFALFSSGASRVELCIFDGLREQRLPLTARTGDIWHGYLPDAQPGLCYGYRVDGAFDPSRGQRFNANKLLLDPCARQMDGWVVDDQRLHGGYHQPDPSDSAEVMPPSVVVDEHYDWQGDRLPRTPWSQTVLYEAHVRGLTRRHPGIPAAIRGTYAALAHPVMLDYLTQLGVTALELMPVQQHADEPRLQSMGLRNYWGYNTLLPFAVDNSLAASDDPLNEFRDTVRALHQAGIEVILDVVFNHSAELDVDGPTLTLRGIDNASYYWLTENGDYHNWAGCGNVLRLEHPAVLHWVIECLTFWHEVCHVDGFRFDLATILGRLPDFSSSAPFFTALRNHRSLRDCKLIAEPWDISPGGYQLGQFPAPFAEWNDRFRDDMRRFWLHGDLPIGVLARRFAASSEVFERGSRQPWASVNMLTSHDGFTLRDLVCFNHKHNDANGEQNRDGTNSNFSFNHGTEGLEADETTQARRRVSQQALLTTLLLSQGTPMLLAGDEFGNSQQGNNNAYCQDNALAWLHWDQADDALLAFTSGLIRLRRSIPALQRGRWWRDDDEDDVRWLNAQGEALTPYEWEQGTHQLQIQLSERWLLLVNATPQVSDFSLPEGEWRVAPPFSATDHLLDGQTWRGQANAVCVLVKQ</sequence>